<reference key="1">
    <citation type="journal article" date="2005" name="Science">
        <title>The genome of the basidiomycetous yeast and human pathogen Cryptococcus neoformans.</title>
        <authorList>
            <person name="Loftus B.J."/>
            <person name="Fung E."/>
            <person name="Roncaglia P."/>
            <person name="Rowley D."/>
            <person name="Amedeo P."/>
            <person name="Bruno D."/>
            <person name="Vamathevan J."/>
            <person name="Miranda M."/>
            <person name="Anderson I.J."/>
            <person name="Fraser J.A."/>
            <person name="Allen J.E."/>
            <person name="Bosdet I.E."/>
            <person name="Brent M.R."/>
            <person name="Chiu R."/>
            <person name="Doering T.L."/>
            <person name="Donlin M.J."/>
            <person name="D'Souza C.A."/>
            <person name="Fox D.S."/>
            <person name="Grinberg V."/>
            <person name="Fu J."/>
            <person name="Fukushima M."/>
            <person name="Haas B.J."/>
            <person name="Huang J.C."/>
            <person name="Janbon G."/>
            <person name="Jones S.J.M."/>
            <person name="Koo H.L."/>
            <person name="Krzywinski M.I."/>
            <person name="Kwon-Chung K.J."/>
            <person name="Lengeler K.B."/>
            <person name="Maiti R."/>
            <person name="Marra M.A."/>
            <person name="Marra R.E."/>
            <person name="Mathewson C.A."/>
            <person name="Mitchell T.G."/>
            <person name="Pertea M."/>
            <person name="Riggs F.R."/>
            <person name="Salzberg S.L."/>
            <person name="Schein J.E."/>
            <person name="Shvartsbeyn A."/>
            <person name="Shin H."/>
            <person name="Shumway M."/>
            <person name="Specht C.A."/>
            <person name="Suh B.B."/>
            <person name="Tenney A."/>
            <person name="Utterback T.R."/>
            <person name="Wickes B.L."/>
            <person name="Wortman J.R."/>
            <person name="Wye N.H."/>
            <person name="Kronstad J.W."/>
            <person name="Lodge J.K."/>
            <person name="Heitman J."/>
            <person name="Davis R.W."/>
            <person name="Fraser C.M."/>
            <person name="Hyman R.W."/>
        </authorList>
    </citation>
    <scope>NUCLEOTIDE SEQUENCE [LARGE SCALE GENOMIC DNA]</scope>
    <source>
        <strain>JEC21 / ATCC MYA-565</strain>
    </source>
</reference>
<name>EFR3_CRYNJ</name>
<organism>
    <name type="scientific">Cryptococcus neoformans var. neoformans serotype D (strain JEC21 / ATCC MYA-565)</name>
    <name type="common">Filobasidiella neoformans</name>
    <dbReference type="NCBI Taxonomy" id="214684"/>
    <lineage>
        <taxon>Eukaryota</taxon>
        <taxon>Fungi</taxon>
        <taxon>Dikarya</taxon>
        <taxon>Basidiomycota</taxon>
        <taxon>Agaricomycotina</taxon>
        <taxon>Tremellomycetes</taxon>
        <taxon>Tremellales</taxon>
        <taxon>Cryptococcaceae</taxon>
        <taxon>Cryptococcus</taxon>
        <taxon>Cryptococcus neoformans species complex</taxon>
    </lineage>
</organism>
<evidence type="ECO:0000256" key="1">
    <source>
        <dbReference type="SAM" id="MobiDB-lite"/>
    </source>
</evidence>
<evidence type="ECO:0000305" key="2"/>
<protein>
    <recommendedName>
        <fullName>Protein EFR3</fullName>
    </recommendedName>
</protein>
<gene>
    <name type="primary">EFR3</name>
    <name type="ordered locus">CNE04430</name>
</gene>
<proteinExistence type="inferred from homology"/>
<sequence>MGCIPCRTLQPEVAHLNACYPPPKALLTAGPEYRPLAQDLSKLTYFATNKPSKLAKIGEELEKRVAQESARASSGNHKYRASLLISLAILRALLTECKRDIALFARSTLRVIDSSLDVRVYQRGGIDLEVVGRAAAAFIAYTTYTDGSAVGVDDTLTKTYFEILRKFGSMATVSLLDSSEKPDTEQQNRTRLIALAGLNGAATSDAIFASTRDFPRQIDLIIPPLLVNTFEGQISELKLESAKIGMDASPSPFFSEFAAKGPVAQRRAPSLHAHIPGEKGPTSADVVSAALRSLHSLLQQCNVTQASQIIDRLVMFLDKHGWQYAERDCFVAEQVTAWIPLQYRFIVPTRLVEVLMDLQDRTPTPKHTSALAMVTTILNSTTSLVGLGVTDLLQHLVSLIIRRIHFDLRDALLPSLVQCVSSLGTHIYYADQINDIVEELALRIAEIPSSDTARSEIIRVLTCCISGVMIMTDAADNDAESKQGNNVPQPTPSTPGSPTPPNKGKLPAPAETPFLTPLFEYLRPQAHRSSRRNPISPEVWQETLPLLCEADYSVRSTYARALILFLETEMQRGPTPRTTPASGGSGSETATPNREKGVSFKVTEPTPGETATQTQSGSGATTPPKRNSRSHRPSLPLNRLQSYTHLSSFDNVATPLDFAAALRILDAMHMVVPVAALVTGAPMLLAVDRDAGNELVRRPGDGRAGAWVLERKRAIRELVSLVWRRIADRWGIVEIDDLANKALASLPEPYLIPPYPVPDSPPVFLSLPEEPVSFIQHTLEGESSSTAKPLLDQDTLLDALVKSQTVQAAKQMDEAGLKRLFDGKWSVEQAIKDSMERFSSANLRPDDDSHYNAASALLMSMNNASYQSVNGQRLSRTIDVTDLRDALGGRVDTVSTSGAPSIASFDDSFHSQSAPRSSLQSRRMNKDSDVKEILKDIFKDKKKGTKAPKGIVVNRVKSASASEEARTSTGDENGLGMSGMTQGDGATGHKVVTNPPLDLSLGRPVDVSSSS</sequence>
<comment type="similarity">
    <text evidence="2">Belongs to the EFR3 family.</text>
</comment>
<comment type="sequence caution" evidence="2">
    <conflict type="erroneous gene model prediction">
        <sequence resource="EMBL-CDS" id="AAW43804"/>
    </conflict>
</comment>
<feature type="chain" id="PRO_0000270776" description="Protein EFR3">
    <location>
        <begin position="1"/>
        <end position="1011"/>
    </location>
</feature>
<feature type="region of interest" description="Disordered" evidence="1">
    <location>
        <begin position="478"/>
        <end position="510"/>
    </location>
</feature>
<feature type="region of interest" description="Disordered" evidence="1">
    <location>
        <begin position="571"/>
        <end position="636"/>
    </location>
</feature>
<feature type="region of interest" description="Disordered" evidence="1">
    <location>
        <begin position="891"/>
        <end position="927"/>
    </location>
</feature>
<feature type="region of interest" description="Disordered" evidence="1">
    <location>
        <begin position="955"/>
        <end position="1011"/>
    </location>
</feature>
<feature type="compositionally biased region" description="Pro residues" evidence="1">
    <location>
        <begin position="489"/>
        <end position="501"/>
    </location>
</feature>
<feature type="compositionally biased region" description="Polar residues" evidence="1">
    <location>
        <begin position="576"/>
        <end position="592"/>
    </location>
</feature>
<feature type="compositionally biased region" description="Polar residues" evidence="1">
    <location>
        <begin position="609"/>
        <end position="625"/>
    </location>
</feature>
<feature type="compositionally biased region" description="Polar residues" evidence="1">
    <location>
        <begin position="910"/>
        <end position="922"/>
    </location>
</feature>
<dbReference type="EMBL" id="AE017345">
    <property type="protein sequence ID" value="AAW43804.1"/>
    <property type="status" value="ALT_SEQ"/>
    <property type="molecule type" value="Genomic_DNA"/>
</dbReference>
<dbReference type="RefSeq" id="XP_571111.1">
    <property type="nucleotide sequence ID" value="XM_571111.1"/>
</dbReference>
<dbReference type="SMR" id="P0CN36"/>
<dbReference type="STRING" id="214684.P0CN36"/>
<dbReference type="PaxDb" id="214684-P0CN36"/>
<dbReference type="GeneID" id="3257707"/>
<dbReference type="KEGG" id="cne:CNE04430"/>
<dbReference type="eggNOG" id="KOG1877">
    <property type="taxonomic scope" value="Eukaryota"/>
</dbReference>
<dbReference type="InParanoid" id="P0CN36"/>
<dbReference type="OrthoDB" id="274691at2759"/>
<dbReference type="Proteomes" id="UP000002149">
    <property type="component" value="Chromosome 5"/>
</dbReference>
<dbReference type="GO" id="GO:0072659">
    <property type="term" value="P:protein localization to plasma membrane"/>
    <property type="evidence" value="ECO:0007669"/>
    <property type="project" value="InterPro"/>
</dbReference>
<dbReference type="InterPro" id="IPR016024">
    <property type="entry name" value="ARM-type_fold"/>
</dbReference>
<dbReference type="InterPro" id="IPR039786">
    <property type="entry name" value="EFR3"/>
</dbReference>
<dbReference type="InterPro" id="IPR049150">
    <property type="entry name" value="EFR3_HEAT-like_rpt"/>
</dbReference>
<dbReference type="PANTHER" id="PTHR47766">
    <property type="entry name" value="PROTEIN EFR3"/>
    <property type="match status" value="1"/>
</dbReference>
<dbReference type="PANTHER" id="PTHR47766:SF1">
    <property type="entry name" value="PROTEIN EFR3"/>
    <property type="match status" value="1"/>
</dbReference>
<dbReference type="Pfam" id="PF21072">
    <property type="entry name" value="EFR3"/>
    <property type="match status" value="1"/>
</dbReference>
<dbReference type="SUPFAM" id="SSF48371">
    <property type="entry name" value="ARM repeat"/>
    <property type="match status" value="1"/>
</dbReference>
<accession>P0CN36</accession>
<accession>Q55RT8</accession>
<accession>Q5KG92</accession>
<keyword id="KW-1185">Reference proteome</keyword>